<protein>
    <recommendedName>
        <fullName evidence="1">UPF0761 membrane protein YihY</fullName>
    </recommendedName>
</protein>
<name>YIHY_SALDC</name>
<evidence type="ECO:0000255" key="1">
    <source>
        <dbReference type="HAMAP-Rule" id="MF_00672"/>
    </source>
</evidence>
<dbReference type="EMBL" id="CP001144">
    <property type="protein sequence ID" value="ACH76980.1"/>
    <property type="molecule type" value="Genomic_DNA"/>
</dbReference>
<dbReference type="RefSeq" id="WP_000921423.1">
    <property type="nucleotide sequence ID" value="NC_011205.1"/>
</dbReference>
<dbReference type="KEGG" id="sed:SeD_A4416"/>
<dbReference type="HOGENOM" id="CLU_032288_0_0_6"/>
<dbReference type="Proteomes" id="UP000008322">
    <property type="component" value="Chromosome"/>
</dbReference>
<dbReference type="GO" id="GO:0005886">
    <property type="term" value="C:plasma membrane"/>
    <property type="evidence" value="ECO:0007669"/>
    <property type="project" value="UniProtKB-SubCell"/>
</dbReference>
<dbReference type="HAMAP" id="MF_00672">
    <property type="entry name" value="UPF0761"/>
    <property type="match status" value="1"/>
</dbReference>
<dbReference type="InterPro" id="IPR023679">
    <property type="entry name" value="UPF0761_bac"/>
</dbReference>
<dbReference type="InterPro" id="IPR017039">
    <property type="entry name" value="Virul_fac_BrkB"/>
</dbReference>
<dbReference type="NCBIfam" id="NF002457">
    <property type="entry name" value="PRK01637.1"/>
    <property type="match status" value="1"/>
</dbReference>
<dbReference type="NCBIfam" id="TIGR00765">
    <property type="entry name" value="yihY_not_rbn"/>
    <property type="match status" value="1"/>
</dbReference>
<dbReference type="PANTHER" id="PTHR30213">
    <property type="entry name" value="INNER MEMBRANE PROTEIN YHJD"/>
    <property type="match status" value="1"/>
</dbReference>
<dbReference type="PANTHER" id="PTHR30213:SF0">
    <property type="entry name" value="UPF0761 MEMBRANE PROTEIN YIHY"/>
    <property type="match status" value="1"/>
</dbReference>
<dbReference type="Pfam" id="PF03631">
    <property type="entry name" value="Virul_fac_BrkB"/>
    <property type="match status" value="1"/>
</dbReference>
<dbReference type="PIRSF" id="PIRSF035875">
    <property type="entry name" value="RNase_BN"/>
    <property type="match status" value="1"/>
</dbReference>
<proteinExistence type="inferred from homology"/>
<keyword id="KW-0997">Cell inner membrane</keyword>
<keyword id="KW-1003">Cell membrane</keyword>
<keyword id="KW-0472">Membrane</keyword>
<keyword id="KW-0812">Transmembrane</keyword>
<keyword id="KW-1133">Transmembrane helix</keyword>
<organism>
    <name type="scientific">Salmonella dublin (strain CT_02021853)</name>
    <dbReference type="NCBI Taxonomy" id="439851"/>
    <lineage>
        <taxon>Bacteria</taxon>
        <taxon>Pseudomonadati</taxon>
        <taxon>Pseudomonadota</taxon>
        <taxon>Gammaproteobacteria</taxon>
        <taxon>Enterobacterales</taxon>
        <taxon>Enterobacteriaceae</taxon>
        <taxon>Salmonella</taxon>
    </lineage>
</organism>
<feature type="chain" id="PRO_1000131560" description="UPF0761 membrane protein YihY">
    <location>
        <begin position="1"/>
        <end position="290"/>
    </location>
</feature>
<feature type="transmembrane region" description="Helical" evidence="1">
    <location>
        <begin position="44"/>
        <end position="64"/>
    </location>
</feature>
<feature type="transmembrane region" description="Helical" evidence="1">
    <location>
        <begin position="104"/>
        <end position="124"/>
    </location>
</feature>
<feature type="transmembrane region" description="Helical" evidence="1">
    <location>
        <begin position="140"/>
        <end position="160"/>
    </location>
</feature>
<feature type="transmembrane region" description="Helical" evidence="1">
    <location>
        <begin position="183"/>
        <end position="203"/>
    </location>
</feature>
<feature type="transmembrane region" description="Helical" evidence="1">
    <location>
        <begin position="210"/>
        <end position="230"/>
    </location>
</feature>
<feature type="transmembrane region" description="Helical" evidence="1">
    <location>
        <begin position="244"/>
        <end position="264"/>
    </location>
</feature>
<comment type="subcellular location">
    <subcellularLocation>
        <location evidence="1">Cell inner membrane</location>
        <topology evidence="1">Multi-pass membrane protein</topology>
    </subcellularLocation>
</comment>
<comment type="similarity">
    <text evidence="1">Belongs to the UPF0761 family.</text>
</comment>
<gene>
    <name evidence="1" type="primary">yihY</name>
    <name type="ordered locus">SeD_A4416</name>
</gene>
<reference key="1">
    <citation type="journal article" date="2011" name="J. Bacteriol.">
        <title>Comparative genomics of 28 Salmonella enterica isolates: evidence for CRISPR-mediated adaptive sublineage evolution.</title>
        <authorList>
            <person name="Fricke W.F."/>
            <person name="Mammel M.K."/>
            <person name="McDermott P.F."/>
            <person name="Tartera C."/>
            <person name="White D.G."/>
            <person name="Leclerc J.E."/>
            <person name="Ravel J."/>
            <person name="Cebula T.A."/>
        </authorList>
    </citation>
    <scope>NUCLEOTIDE SEQUENCE [LARGE SCALE GENOMIC DNA]</scope>
    <source>
        <strain>CT_02021853</strain>
    </source>
</reference>
<accession>B5FP16</accession>
<sequence length="290" mass="32645">MLKTVHQKAGRHTRPVRAWLKLLWQRIDEDNMTTLAGNLAYVSLLSLVPLIAVVFALFAAFPMFSDVSIQLRHFIFANFMPATGDVIQRYIEQFVANSNKMTAVGACGLIVTALLLMYAIDSALNTIWRSKRTRPKVYSFAVYWMILTLGPLLAGASLAISSYLLSLRWASDLNTVIDNVLRILPLLLSWISFWLLYSIVPTTRVPNRDALVGAFVAALLFEAGKKGFALYITMFPSYQLIYGVLAVIPILFVWVYWTWCIVLLGAEITVTLGEYRKLKQAAEQEEADQP</sequence>